<proteinExistence type="inferred from homology"/>
<dbReference type="EC" id="3.1.21.10" evidence="1"/>
<dbReference type="EMBL" id="BX294140">
    <property type="protein sequence ID" value="CAD73926.1"/>
    <property type="molecule type" value="Genomic_DNA"/>
</dbReference>
<dbReference type="RefSeq" id="NP_866240.1">
    <property type="nucleotide sequence ID" value="NC_005027.1"/>
</dbReference>
<dbReference type="RefSeq" id="WP_011120029.1">
    <property type="nucleotide sequence ID" value="NC_005027.1"/>
</dbReference>
<dbReference type="SMR" id="Q7US71"/>
<dbReference type="FunCoup" id="Q7US71">
    <property type="interactions" value="195"/>
</dbReference>
<dbReference type="STRING" id="243090.RB4673"/>
<dbReference type="EnsemblBacteria" id="CAD73926">
    <property type="protein sequence ID" value="CAD73926"/>
    <property type="gene ID" value="RB4673"/>
</dbReference>
<dbReference type="KEGG" id="rba:RB4673"/>
<dbReference type="PATRIC" id="fig|243090.15.peg.2195"/>
<dbReference type="eggNOG" id="COG0817">
    <property type="taxonomic scope" value="Bacteria"/>
</dbReference>
<dbReference type="HOGENOM" id="CLU_091257_3_1_0"/>
<dbReference type="InParanoid" id="Q7US71"/>
<dbReference type="OrthoDB" id="9805499at2"/>
<dbReference type="Proteomes" id="UP000001025">
    <property type="component" value="Chromosome"/>
</dbReference>
<dbReference type="GO" id="GO:0005737">
    <property type="term" value="C:cytoplasm"/>
    <property type="evidence" value="ECO:0007669"/>
    <property type="project" value="UniProtKB-SubCell"/>
</dbReference>
<dbReference type="GO" id="GO:0048476">
    <property type="term" value="C:Holliday junction resolvase complex"/>
    <property type="evidence" value="ECO:0007669"/>
    <property type="project" value="UniProtKB-UniRule"/>
</dbReference>
<dbReference type="GO" id="GO:0008821">
    <property type="term" value="F:crossover junction DNA endonuclease activity"/>
    <property type="evidence" value="ECO:0007669"/>
    <property type="project" value="UniProtKB-UniRule"/>
</dbReference>
<dbReference type="GO" id="GO:0003677">
    <property type="term" value="F:DNA binding"/>
    <property type="evidence" value="ECO:0007669"/>
    <property type="project" value="UniProtKB-KW"/>
</dbReference>
<dbReference type="GO" id="GO:0000287">
    <property type="term" value="F:magnesium ion binding"/>
    <property type="evidence" value="ECO:0007669"/>
    <property type="project" value="UniProtKB-UniRule"/>
</dbReference>
<dbReference type="GO" id="GO:0006310">
    <property type="term" value="P:DNA recombination"/>
    <property type="evidence" value="ECO:0007669"/>
    <property type="project" value="UniProtKB-UniRule"/>
</dbReference>
<dbReference type="GO" id="GO:0006281">
    <property type="term" value="P:DNA repair"/>
    <property type="evidence" value="ECO:0007669"/>
    <property type="project" value="UniProtKB-UniRule"/>
</dbReference>
<dbReference type="CDD" id="cd16962">
    <property type="entry name" value="RuvC"/>
    <property type="match status" value="1"/>
</dbReference>
<dbReference type="FunFam" id="3.30.420.10:FF:000002">
    <property type="entry name" value="Crossover junction endodeoxyribonuclease RuvC"/>
    <property type="match status" value="1"/>
</dbReference>
<dbReference type="Gene3D" id="3.30.420.10">
    <property type="entry name" value="Ribonuclease H-like superfamily/Ribonuclease H"/>
    <property type="match status" value="1"/>
</dbReference>
<dbReference type="HAMAP" id="MF_00034">
    <property type="entry name" value="RuvC"/>
    <property type="match status" value="1"/>
</dbReference>
<dbReference type="InterPro" id="IPR012337">
    <property type="entry name" value="RNaseH-like_sf"/>
</dbReference>
<dbReference type="InterPro" id="IPR036397">
    <property type="entry name" value="RNaseH_sf"/>
</dbReference>
<dbReference type="InterPro" id="IPR020563">
    <property type="entry name" value="X-over_junc_endoDNase_Mg_BS"/>
</dbReference>
<dbReference type="InterPro" id="IPR002176">
    <property type="entry name" value="X-over_junc_endoDNase_RuvC"/>
</dbReference>
<dbReference type="NCBIfam" id="TIGR00228">
    <property type="entry name" value="ruvC"/>
    <property type="match status" value="1"/>
</dbReference>
<dbReference type="PANTHER" id="PTHR30194">
    <property type="entry name" value="CROSSOVER JUNCTION ENDODEOXYRIBONUCLEASE RUVC"/>
    <property type="match status" value="1"/>
</dbReference>
<dbReference type="PANTHER" id="PTHR30194:SF3">
    <property type="entry name" value="CROSSOVER JUNCTION ENDODEOXYRIBONUCLEASE RUVC"/>
    <property type="match status" value="1"/>
</dbReference>
<dbReference type="Pfam" id="PF02075">
    <property type="entry name" value="RuvC"/>
    <property type="match status" value="1"/>
</dbReference>
<dbReference type="PRINTS" id="PR00696">
    <property type="entry name" value="RSOLVASERUVC"/>
</dbReference>
<dbReference type="SUPFAM" id="SSF53098">
    <property type="entry name" value="Ribonuclease H-like"/>
    <property type="match status" value="1"/>
</dbReference>
<dbReference type="PROSITE" id="PS01321">
    <property type="entry name" value="RUVC"/>
    <property type="match status" value="1"/>
</dbReference>
<sequence>MGTQVVTARPGSASCILGIDPGLNTTGYAVISREGPRLCLREAGVIKSRRSDTLPERLREIHVGLSEVFAVHAVDLMALEQLFSHYDRPRTAILMGHARGVICLAAASAGVPVEHYEPTRVKKVMTGNGRAPKSQIQLAVKMQLNLQSVPEPADVADAMAISLCGHYLANNPIDQALA</sequence>
<name>RUVC_RHOBA</name>
<keyword id="KW-0963">Cytoplasm</keyword>
<keyword id="KW-0227">DNA damage</keyword>
<keyword id="KW-0233">DNA recombination</keyword>
<keyword id="KW-0234">DNA repair</keyword>
<keyword id="KW-0238">DNA-binding</keyword>
<keyword id="KW-0255">Endonuclease</keyword>
<keyword id="KW-0378">Hydrolase</keyword>
<keyword id="KW-0460">Magnesium</keyword>
<keyword id="KW-0479">Metal-binding</keyword>
<keyword id="KW-0540">Nuclease</keyword>
<keyword id="KW-1185">Reference proteome</keyword>
<organism>
    <name type="scientific">Rhodopirellula baltica (strain DSM 10527 / NCIMB 13988 / SH1)</name>
    <dbReference type="NCBI Taxonomy" id="243090"/>
    <lineage>
        <taxon>Bacteria</taxon>
        <taxon>Pseudomonadati</taxon>
        <taxon>Planctomycetota</taxon>
        <taxon>Planctomycetia</taxon>
        <taxon>Pirellulales</taxon>
        <taxon>Pirellulaceae</taxon>
        <taxon>Rhodopirellula</taxon>
    </lineage>
</organism>
<accession>Q7US71</accession>
<reference key="1">
    <citation type="journal article" date="2003" name="Proc. Natl. Acad. Sci. U.S.A.">
        <title>Complete genome sequence of the marine planctomycete Pirellula sp. strain 1.</title>
        <authorList>
            <person name="Gloeckner F.O."/>
            <person name="Kube M."/>
            <person name="Bauer M."/>
            <person name="Teeling H."/>
            <person name="Lombardot T."/>
            <person name="Ludwig W."/>
            <person name="Gade D."/>
            <person name="Beck A."/>
            <person name="Borzym K."/>
            <person name="Heitmann K."/>
            <person name="Rabus R."/>
            <person name="Schlesner H."/>
            <person name="Amann R."/>
            <person name="Reinhardt R."/>
        </authorList>
    </citation>
    <scope>NUCLEOTIDE SEQUENCE [LARGE SCALE GENOMIC DNA]</scope>
    <source>
        <strain>DSM 10527 / NCIMB 13988 / SH1</strain>
    </source>
</reference>
<gene>
    <name evidence="1" type="primary">ruvC</name>
    <name type="ordered locus">RB4673</name>
</gene>
<comment type="function">
    <text evidence="1">The RuvA-RuvB-RuvC complex processes Holliday junction (HJ) DNA during genetic recombination and DNA repair. Endonuclease that resolves HJ intermediates. Cleaves cruciform DNA by making single-stranded nicks across the HJ at symmetrical positions within the homologous arms, yielding a 5'-phosphate and a 3'-hydroxyl group; requires a central core of homology in the junction. The consensus cleavage sequence is 5'-(A/T)TT(C/G)-3'. Cleavage occurs on the 3'-side of the TT dinucleotide at the point of strand exchange. HJ branch migration catalyzed by RuvA-RuvB allows RuvC to scan DNA until it finds its consensus sequence, where it cleaves and resolves the cruciform DNA.</text>
</comment>
<comment type="catalytic activity">
    <reaction evidence="1">
        <text>Endonucleolytic cleavage at a junction such as a reciprocal single-stranded crossover between two homologous DNA duplexes (Holliday junction).</text>
        <dbReference type="EC" id="3.1.21.10"/>
    </reaction>
</comment>
<comment type="cofactor">
    <cofactor evidence="1">
        <name>Mg(2+)</name>
        <dbReference type="ChEBI" id="CHEBI:18420"/>
    </cofactor>
    <text evidence="1">Binds 2 Mg(2+) ion per subunit.</text>
</comment>
<comment type="subunit">
    <text evidence="1">Homodimer which binds Holliday junction (HJ) DNA. The HJ becomes 2-fold symmetrical on binding to RuvC with unstacked arms; it has a different conformation from HJ DNA in complex with RuvA. In the full resolvosome a probable DNA-RuvA(4)-RuvB(12)-RuvC(2) complex forms which resolves the HJ.</text>
</comment>
<comment type="subcellular location">
    <subcellularLocation>
        <location evidence="1">Cytoplasm</location>
    </subcellularLocation>
</comment>
<comment type="similarity">
    <text evidence="1">Belongs to the RuvC family.</text>
</comment>
<evidence type="ECO:0000255" key="1">
    <source>
        <dbReference type="HAMAP-Rule" id="MF_00034"/>
    </source>
</evidence>
<feature type="chain" id="PRO_0000183127" description="Crossover junction endodeoxyribonuclease RuvC">
    <location>
        <begin position="1"/>
        <end position="178"/>
    </location>
</feature>
<feature type="active site" evidence="1">
    <location>
        <position position="20"/>
    </location>
</feature>
<feature type="active site" evidence="1">
    <location>
        <position position="80"/>
    </location>
</feature>
<feature type="active site" evidence="1">
    <location>
        <position position="154"/>
    </location>
</feature>
<feature type="binding site" evidence="1">
    <location>
        <position position="20"/>
    </location>
    <ligand>
        <name>Mg(2+)</name>
        <dbReference type="ChEBI" id="CHEBI:18420"/>
        <label>1</label>
    </ligand>
</feature>
<feature type="binding site" evidence="1">
    <location>
        <position position="80"/>
    </location>
    <ligand>
        <name>Mg(2+)</name>
        <dbReference type="ChEBI" id="CHEBI:18420"/>
        <label>2</label>
    </ligand>
</feature>
<feature type="binding site" evidence="1">
    <location>
        <position position="154"/>
    </location>
    <ligand>
        <name>Mg(2+)</name>
        <dbReference type="ChEBI" id="CHEBI:18420"/>
        <label>1</label>
    </ligand>
</feature>
<protein>
    <recommendedName>
        <fullName evidence="1">Crossover junction endodeoxyribonuclease RuvC</fullName>
        <ecNumber evidence="1">3.1.21.10</ecNumber>
    </recommendedName>
    <alternativeName>
        <fullName evidence="1">Holliday junction nuclease RuvC</fullName>
    </alternativeName>
    <alternativeName>
        <fullName evidence="1">Holliday junction resolvase RuvC</fullName>
    </alternativeName>
</protein>